<comment type="function">
    <text evidence="2 3 4 5 6 9">2-oxoglutarate-dependent dioxygenase; part of the gene cluster that mediates the biosynthesis of pneumocandins, lipohexapeptides of the echinocandin family that prevent fungal cell wall formation by non-competitive inhibition of beta-1,3-glucan synthase (PubMed:27705900). The 10,12-dimethylmyristoyl side chain is synthesized by the reducing polyketide synthase gloL/GLPKS4 (PubMed:27494047). The thioesterase gloN/GLHYD exclusively interacts with gloL/GLPKS4 to maintain turnover of the polyketide side chain (PubMed:27494047). The 10R,12S-dimethylmyristic acid is then transferred to the first thiolation domain of the nonribosomal peptide synthetase gloA/GLNRPS4 by the acyl-AMP ligase gloD/GLligase, followed by its acylation to L-ornithine to trigger elongation of the cyclic hexapeptide (PubMed:27494047). L-ornithine, 4R-hydroxyl-L-proline (generated from L-proline by the dioxygenase gloF/GLOXY2), 3S-hydroxyl-L-homotyrosine (generated by gloG/GLHtyB, gloH/GLHtyA, gloI/GLHtyC, gloJ/GLHtyD and hydroxylated at C-3 by the dioxygenase gloM/GLOXY1), 3R-hydroxyl-L-glutamine (generated from L-glutamine probably by the dioxygenase gloE/GLOXY3) and 3S-hydroxyl-L-proline (generated from L-proline by the dioxygenase gloF/GLOXY2 to yield pneumocandin B0), or 3S-hydroxyl-4S-methyl-L-proline (generated from L-leucine by the dioxygenase gloC/GLOXY4 to yield pneumocandin A0) are sequentially added to the growing chain (PubMed:25270390, PubMed:25527531, PubMed:25879325). The last C domain of gloA/GLNRPS4 is proposed to be responsible for cyclization by condensation to form the peptide bond between L-ornithine and 3S-hydroxyl-4S-methyl-L-proline (for pneumocandin A0) or 3S-hydroxyl-L-proline (for pneumocandin B0). Finally, the subsequent C-4 hydroxylation of 3S-hydroxyl-L-homotyrosine and L-ornithine dihydroxylation at C-4 and C-5 are performed by the cytochrome P450 monooxygenases gloP/GLP450-1 and gloO/GLP450-2, respectively (PubMed:25879325).</text>
</comment>
<comment type="cofactor">
    <cofactor evidence="1">
        <name>Fe(2+)</name>
        <dbReference type="ChEBI" id="CHEBI:29033"/>
    </cofactor>
    <text evidence="1">Binds 1 Fe(2+) ion per subunit.</text>
</comment>
<comment type="pathway">
    <text evidence="11">Mycotoxin biosynthesis.</text>
</comment>
<comment type="biotechnology">
    <text evidence="3 4 5">Pneumocandin B0 is the starting molecule for the first semisynthetic echinocandin antifungal drug, caspofungin acetate (PubMed:25527531). Pneumocandin B0 is a minor fermentation product, and its industrial production was achieved by a combination of extensive mutation and medium optimization (PubMed:25527531). Inactivation of three of gloP/GLP450-1, gloO/GLP450-2, and gloM/GLOXY1 generates 13 different pneumocandin analogs that lack one, two, three, or four hydroxyl groups on 4R,5R-dihydroxy-ornithine and 3S,4S-dihydroxy-homotyrosine of the parent hexapeptide (PubMed:25879325). All of these cyclic lipopeptides show potent antifungal activities, and two new metabolites pneumocandins F and G are more potent in vitro against Candida species and Aspergillus fumigatus than the principal fermentation products, pneumocandins A0 and B0 (PubMed:25879325). Moreover, feeding alternative side chain precursors yields acrophiarin and 4 additional pneumocandin congeners with straight C14, C15, and C16 side chains. One of those compounds, pneumocandin I, has elevated antifungal activity and similar hemolytic activity compared to pneumocandin B0, the starting molecule for caspofungin, demonstrating the potential for using gloD/GLligase for future engineering of new echinocandin analogs (PubMed:27494047).</text>
</comment>
<comment type="similarity">
    <text evidence="10">Belongs to the iron/ascorbate-dependent oxidoreductase family.</text>
</comment>
<protein>
    <recommendedName>
        <fullName evidence="7">2-oxoglutarate-dependent dioxygenase gloE</fullName>
        <ecNumber evidence="11">1.14.-.-</ecNumber>
    </recommendedName>
    <alternativeName>
        <fullName evidence="9">Glutamine hydroxylase</fullName>
    </alternativeName>
    <alternativeName>
        <fullName evidence="7">Pneumocandin biosynthesis cluster protein E</fullName>
    </alternativeName>
</protein>
<keyword id="KW-0223">Dioxygenase</keyword>
<keyword id="KW-0408">Iron</keyword>
<keyword id="KW-0479">Metal-binding</keyword>
<keyword id="KW-0560">Oxidoreductase</keyword>
<keyword id="KW-1185">Reference proteome</keyword>
<organism>
    <name type="scientific">Glarea lozoyensis (strain ATCC 20868 / MF5171)</name>
    <dbReference type="NCBI Taxonomy" id="1116229"/>
    <lineage>
        <taxon>Eukaryota</taxon>
        <taxon>Fungi</taxon>
        <taxon>Dikarya</taxon>
        <taxon>Ascomycota</taxon>
        <taxon>Pezizomycotina</taxon>
        <taxon>Leotiomycetes</taxon>
        <taxon>Helotiales</taxon>
        <taxon>Helotiaceae</taxon>
        <taxon>Glarea</taxon>
    </lineage>
</organism>
<dbReference type="EC" id="1.14.-.-" evidence="11"/>
<dbReference type="EMBL" id="KE145356">
    <property type="protein sequence ID" value="EPE34348.1"/>
    <property type="molecule type" value="Genomic_DNA"/>
</dbReference>
<dbReference type="RefSeq" id="XP_008078283.1">
    <property type="nucleotide sequence ID" value="XM_008080092.1"/>
</dbReference>
<dbReference type="SMR" id="S3E7Q2"/>
<dbReference type="STRING" id="1116229.S3E7Q2"/>
<dbReference type="GeneID" id="19469089"/>
<dbReference type="KEGG" id="glz:GLAREA_10042"/>
<dbReference type="eggNOG" id="KOG0143">
    <property type="taxonomic scope" value="Eukaryota"/>
</dbReference>
<dbReference type="HOGENOM" id="CLU_010119_4_0_1"/>
<dbReference type="OMA" id="HNKHTDV"/>
<dbReference type="OrthoDB" id="288590at2759"/>
<dbReference type="Proteomes" id="UP000016922">
    <property type="component" value="Unassembled WGS sequence"/>
</dbReference>
<dbReference type="GO" id="GO:0051213">
    <property type="term" value="F:dioxygenase activity"/>
    <property type="evidence" value="ECO:0007669"/>
    <property type="project" value="UniProtKB-KW"/>
</dbReference>
<dbReference type="GO" id="GO:0046872">
    <property type="term" value="F:metal ion binding"/>
    <property type="evidence" value="ECO:0007669"/>
    <property type="project" value="UniProtKB-KW"/>
</dbReference>
<dbReference type="GO" id="GO:0044283">
    <property type="term" value="P:small molecule biosynthetic process"/>
    <property type="evidence" value="ECO:0007669"/>
    <property type="project" value="UniProtKB-ARBA"/>
</dbReference>
<dbReference type="Gene3D" id="2.60.120.330">
    <property type="entry name" value="B-lactam Antibiotic, Isopenicillin N Synthase, Chain"/>
    <property type="match status" value="1"/>
</dbReference>
<dbReference type="InterPro" id="IPR026992">
    <property type="entry name" value="DIOX_N"/>
</dbReference>
<dbReference type="InterPro" id="IPR044861">
    <property type="entry name" value="IPNS-like_FE2OG_OXY"/>
</dbReference>
<dbReference type="InterPro" id="IPR027443">
    <property type="entry name" value="IPNS-like_sf"/>
</dbReference>
<dbReference type="InterPro" id="IPR050231">
    <property type="entry name" value="Iron_ascorbate_oxido_reductase"/>
</dbReference>
<dbReference type="InterPro" id="IPR005123">
    <property type="entry name" value="Oxoglu/Fe-dep_dioxygenase_dom"/>
</dbReference>
<dbReference type="PANTHER" id="PTHR47990">
    <property type="entry name" value="2-OXOGLUTARATE (2OG) AND FE(II)-DEPENDENT OXYGENASE SUPERFAMILY PROTEIN-RELATED"/>
    <property type="match status" value="1"/>
</dbReference>
<dbReference type="Pfam" id="PF03171">
    <property type="entry name" value="2OG-FeII_Oxy"/>
    <property type="match status" value="1"/>
</dbReference>
<dbReference type="Pfam" id="PF14226">
    <property type="entry name" value="DIOX_N"/>
    <property type="match status" value="1"/>
</dbReference>
<dbReference type="SUPFAM" id="SSF51197">
    <property type="entry name" value="Clavaminate synthase-like"/>
    <property type="match status" value="1"/>
</dbReference>
<dbReference type="PROSITE" id="PS51471">
    <property type="entry name" value="FE2OG_OXY"/>
    <property type="match status" value="1"/>
</dbReference>
<sequence length="328" mass="37835">MDYIKQAESTQLSSLSLSRLEGNNAEESKRLLEACAQDGFFYLDLRDHKQLLVDYEALLEIIKQYFNEPLDQKMKDDRKSDTIGYEPVATSAGVLDGLPDYYESFKVSWNQLRDHVQELPTVVETNIEVFDRFAKYVHSILLMILSRLSQTMGRNNDNRFESYHRDSIATRTNLTFLKYPKQDTTEHGVGHNKHTDVGTLTFLLSGQRGLQRLTPEGWCHVEPRSGFAVVNVGDSLRFLSDCVLSSVIHRVLPVGAHQTEDRYTLAYFLRPEDDAVFKDINGNLVSARSWHDRKFDHFRASHNQQKNDTILMGGMEENQKFLQYKFQA</sequence>
<accession>S3E7Q2</accession>
<evidence type="ECO:0000255" key="1">
    <source>
        <dbReference type="PROSITE-ProRule" id="PRU00805"/>
    </source>
</evidence>
<evidence type="ECO:0000269" key="2">
    <source>
    </source>
</evidence>
<evidence type="ECO:0000269" key="3">
    <source>
    </source>
</evidence>
<evidence type="ECO:0000269" key="4">
    <source>
    </source>
</evidence>
<evidence type="ECO:0000269" key="5">
    <source>
    </source>
</evidence>
<evidence type="ECO:0000269" key="6">
    <source>
    </source>
</evidence>
<evidence type="ECO:0000303" key="7">
    <source>
    </source>
</evidence>
<evidence type="ECO:0000303" key="8">
    <source>
    </source>
</evidence>
<evidence type="ECO:0000303" key="9">
    <source>
    </source>
</evidence>
<evidence type="ECO:0000305" key="10"/>
<evidence type="ECO:0000305" key="11">
    <source>
    </source>
</evidence>
<gene>
    <name evidence="7" type="primary">gloE</name>
    <name evidence="8" type="synonym">GLOXY3</name>
    <name type="ORF">GLAREA_10042</name>
</gene>
<name>GLOE_GLAL2</name>
<reference key="1">
    <citation type="journal article" date="2013" name="BMC Genomics">
        <title>Genomics-driven discovery of the pneumocandin biosynthetic gene cluster in the fungus Glarea lozoyensis.</title>
        <authorList>
            <person name="Chen L."/>
            <person name="Yue Q."/>
            <person name="Zhang X."/>
            <person name="Xiang M."/>
            <person name="Wang C."/>
            <person name="Li S."/>
            <person name="Che Y."/>
            <person name="Ortiz-Lopez F.J."/>
            <person name="Bills G.F."/>
            <person name="Liu X."/>
            <person name="An Z."/>
        </authorList>
    </citation>
    <scope>NUCLEOTIDE SEQUENCE [LARGE SCALE GENOMIC DNA]</scope>
    <scope>IDENTIFICATION</scope>
    <scope>FUNCTION</scope>
    <source>
        <strain>ATCC 20868 / MF5171</strain>
    </source>
</reference>
<reference key="2">
    <citation type="journal article" date="2014" name="ChemBioChem">
        <title>Pneumocandin biosynthesis: involvement of a trans-selective proline hydroxylase.</title>
        <authorList>
            <person name="Houwaart S."/>
            <person name="Youssar L."/>
            <person name="Huettel W."/>
        </authorList>
    </citation>
    <scope>FUNCTION</scope>
</reference>
<reference key="3">
    <citation type="journal article" date="2015" name="ACS Chem. Biol.">
        <title>Genetic manipulation of the pneumocandin biosynthetic pathway for generation of analogues and evaluation of their antifungal activity.</title>
        <authorList>
            <person name="Li Y."/>
            <person name="Chen L."/>
            <person name="Yue Q."/>
            <person name="Liu X."/>
            <person name="An Z."/>
            <person name="Bills G.F."/>
        </authorList>
    </citation>
    <scope>FUNCTION</scope>
    <scope>PATHWAY</scope>
    <scope>BIOTECHNOLOGY</scope>
</reference>
<reference key="4">
    <citation type="journal article" date="2015" name="Appl. Environ. Microbiol.">
        <title>Engineering of Glarea lozoyensis for exclusive production of the pneumocandin B0 precursor of the antifungal drug caspofungin acetate.</title>
        <authorList>
            <person name="Chen L."/>
            <person name="Yue Q."/>
            <person name="Li Y."/>
            <person name="Niu X."/>
            <person name="Xiang M."/>
            <person name="Wang W."/>
            <person name="Bills G.F."/>
            <person name="Liu X."/>
            <person name="An Z."/>
        </authorList>
    </citation>
    <scope>FUNCTION</scope>
    <scope>BIOTECHNOLOGY</scope>
</reference>
<reference key="5">
    <citation type="journal article" date="2016" name="ACS Chem. Biol.">
        <title>Engineering of new pneumocandin side-chain analogues from Glarea lozoyensis by mutasynthesis and evaluation of their antifungal activity.</title>
        <authorList>
            <person name="Chen L."/>
            <person name="Li Y."/>
            <person name="Yue Q."/>
            <person name="Loksztejn A."/>
            <person name="Yokoyama K."/>
            <person name="Felix E.A."/>
            <person name="Liu X."/>
            <person name="Zhang N."/>
            <person name="An Z."/>
            <person name="Bills G.F."/>
        </authorList>
    </citation>
    <scope>FUNCTION</scope>
    <scope>BIOTECHNOLOGY</scope>
</reference>
<reference key="6">
    <citation type="journal article" date="2018" name="Appl. Environ. Microbiol.">
        <title>Cryptic production of trans-3-hydroxyproline in echinocandin B biosynthesis.</title>
        <authorList>
            <person name="Mattay J."/>
            <person name="Houwaart S."/>
            <person name="Huettel W."/>
        </authorList>
    </citation>
    <scope>FUNCTION</scope>
</reference>
<reference key="7">
    <citation type="journal article" date="2017" name="Z. Naturforsch. C">
        <title>Structural diversity in echinocandin biosynthesis: the impact of oxidation steps and approaches toward an evolutionary explanation.</title>
        <authorList>
            <person name="Huettel W."/>
        </authorList>
    </citation>
    <scope>REVIEW</scope>
</reference>
<feature type="chain" id="PRO_0000444482" description="2-oxoglutarate-dependent dioxygenase gloE">
    <location>
        <begin position="1"/>
        <end position="328"/>
    </location>
</feature>
<feature type="domain" description="Fe2OG dioxygenase" evidence="1">
    <location>
        <begin position="170"/>
        <end position="271"/>
    </location>
</feature>
<feature type="binding site" evidence="1">
    <location>
        <position position="194"/>
    </location>
    <ligand>
        <name>Fe cation</name>
        <dbReference type="ChEBI" id="CHEBI:24875"/>
    </ligand>
</feature>
<feature type="binding site" evidence="1">
    <location>
        <position position="196"/>
    </location>
    <ligand>
        <name>Fe cation</name>
        <dbReference type="ChEBI" id="CHEBI:24875"/>
    </ligand>
</feature>
<feature type="binding site" evidence="1">
    <location>
        <position position="249"/>
    </location>
    <ligand>
        <name>Fe cation</name>
        <dbReference type="ChEBI" id="CHEBI:24875"/>
    </ligand>
</feature>
<feature type="binding site" evidence="1">
    <location>
        <position position="262"/>
    </location>
    <ligand>
        <name>2-oxoglutarate</name>
        <dbReference type="ChEBI" id="CHEBI:16810"/>
    </ligand>
</feature>
<proteinExistence type="evidence at protein level"/>